<feature type="chain" id="PRO_1000205329" description="DNA repair and recombination protein RadA">
    <location>
        <begin position="1"/>
        <end position="324"/>
    </location>
</feature>
<feature type="binding site" evidence="1">
    <location>
        <begin position="114"/>
        <end position="121"/>
    </location>
    <ligand>
        <name>ATP</name>
        <dbReference type="ChEBI" id="CHEBI:30616"/>
    </ligand>
</feature>
<organism>
    <name type="scientific">Saccharolobus islandicus (strain Y.N.15.51 / Yellowstone #2)</name>
    <name type="common">Sulfolobus islandicus</name>
    <dbReference type="NCBI Taxonomy" id="419942"/>
    <lineage>
        <taxon>Archaea</taxon>
        <taxon>Thermoproteota</taxon>
        <taxon>Thermoprotei</taxon>
        <taxon>Sulfolobales</taxon>
        <taxon>Sulfolobaceae</taxon>
        <taxon>Saccharolobus</taxon>
    </lineage>
</organism>
<accession>C3NFU5</accession>
<keyword id="KW-0067">ATP-binding</keyword>
<keyword id="KW-0227">DNA damage</keyword>
<keyword id="KW-0233">DNA recombination</keyword>
<keyword id="KW-0238">DNA-binding</keyword>
<keyword id="KW-0547">Nucleotide-binding</keyword>
<sequence length="324" mass="35840">MSNEVEQKKSIKTINDLPGISQTVINKLIEAGYSSLETLAVASPQDLSVAAGIPLSTAQKIIKEARDALDIRFKTALEVKKERMNVKKISTGSQALDGLLAGGIETRTMTEFFGEFGSGKTQLCHQLSVNVQLPPEKGGLSGKAVYIDTEGTFRWERIENMAKALGLDIDNVMNNIYYIRAINTDHQIAIVDDLQELVSKDPSIKLIVVDSVTSHFRAEYPGRENLAVRQQKLNKHLHQLTRLAEVYDIAVIITNQVMARPDMFYGDPTVAVGGHTLYHVPGIRIQLKKSRGNRRIARVVDAPHLPEGEVVFALTEEGIRDAEE</sequence>
<reference key="1">
    <citation type="journal article" date="2009" name="Proc. Natl. Acad. Sci. U.S.A.">
        <title>Biogeography of the Sulfolobus islandicus pan-genome.</title>
        <authorList>
            <person name="Reno M.L."/>
            <person name="Held N.L."/>
            <person name="Fields C.J."/>
            <person name="Burke P.V."/>
            <person name="Whitaker R.J."/>
        </authorList>
    </citation>
    <scope>NUCLEOTIDE SEQUENCE [LARGE SCALE GENOMIC DNA]</scope>
    <source>
        <strain>Y.N.15.51 / Yellowstone #2</strain>
    </source>
</reference>
<protein>
    <recommendedName>
        <fullName evidence="1">DNA repair and recombination protein RadA</fullName>
    </recommendedName>
</protein>
<gene>
    <name evidence="1" type="primary">radA</name>
    <name type="ordered locus">YN1551_0954</name>
</gene>
<evidence type="ECO:0000255" key="1">
    <source>
        <dbReference type="HAMAP-Rule" id="MF_00348"/>
    </source>
</evidence>
<comment type="function">
    <text evidence="1">Involved in DNA repair and in homologous recombination. Binds and assemble on single-stranded DNA to form a nucleoprotein filament. Hydrolyzes ATP in a ssDNA-dependent manner and promotes DNA strand exchange between homologous DNA molecules.</text>
</comment>
<comment type="similarity">
    <text evidence="1">Belongs to the eukaryotic RecA-like protein family.</text>
</comment>
<proteinExistence type="inferred from homology"/>
<name>RADA_SACI1</name>
<dbReference type="EMBL" id="CP001404">
    <property type="protein sequence ID" value="ACP48063.1"/>
    <property type="molecule type" value="Genomic_DNA"/>
</dbReference>
<dbReference type="RefSeq" id="WP_012711863.1">
    <property type="nucleotide sequence ID" value="NC_012623.1"/>
</dbReference>
<dbReference type="SMR" id="C3NFU5"/>
<dbReference type="GeneID" id="84062203"/>
<dbReference type="KEGG" id="sin:YN1551_0954"/>
<dbReference type="HOGENOM" id="CLU_041732_0_0_2"/>
<dbReference type="Proteomes" id="UP000006818">
    <property type="component" value="Chromosome"/>
</dbReference>
<dbReference type="GO" id="GO:0005524">
    <property type="term" value="F:ATP binding"/>
    <property type="evidence" value="ECO:0007669"/>
    <property type="project" value="UniProtKB-UniRule"/>
</dbReference>
<dbReference type="GO" id="GO:0016887">
    <property type="term" value="F:ATP hydrolysis activity"/>
    <property type="evidence" value="ECO:0007669"/>
    <property type="project" value="InterPro"/>
</dbReference>
<dbReference type="GO" id="GO:0140664">
    <property type="term" value="F:ATP-dependent DNA damage sensor activity"/>
    <property type="evidence" value="ECO:0007669"/>
    <property type="project" value="InterPro"/>
</dbReference>
<dbReference type="GO" id="GO:0003684">
    <property type="term" value="F:damaged DNA binding"/>
    <property type="evidence" value="ECO:0007669"/>
    <property type="project" value="UniProtKB-UniRule"/>
</dbReference>
<dbReference type="GO" id="GO:0006310">
    <property type="term" value="P:DNA recombination"/>
    <property type="evidence" value="ECO:0007669"/>
    <property type="project" value="UniProtKB-UniRule"/>
</dbReference>
<dbReference type="GO" id="GO:0006281">
    <property type="term" value="P:DNA repair"/>
    <property type="evidence" value="ECO:0007669"/>
    <property type="project" value="UniProtKB-UniRule"/>
</dbReference>
<dbReference type="CDD" id="cd19515">
    <property type="entry name" value="archRadA"/>
    <property type="match status" value="1"/>
</dbReference>
<dbReference type="FunFam" id="3.40.50.300:FF:002052">
    <property type="entry name" value="DNA repair protein RAD51 homolog"/>
    <property type="match status" value="1"/>
</dbReference>
<dbReference type="Gene3D" id="1.10.150.20">
    <property type="entry name" value="5' to 3' exonuclease, C-terminal subdomain"/>
    <property type="match status" value="1"/>
</dbReference>
<dbReference type="Gene3D" id="3.40.50.300">
    <property type="entry name" value="P-loop containing nucleotide triphosphate hydrolases"/>
    <property type="match status" value="1"/>
</dbReference>
<dbReference type="HAMAP" id="MF_00348">
    <property type="entry name" value="RadA_arch"/>
    <property type="match status" value="1"/>
</dbReference>
<dbReference type="InterPro" id="IPR003593">
    <property type="entry name" value="AAA+_ATPase"/>
</dbReference>
<dbReference type="InterPro" id="IPR013632">
    <property type="entry name" value="DNA_recomb/repair_Rad51_C"/>
</dbReference>
<dbReference type="InterPro" id="IPR011938">
    <property type="entry name" value="DNA_recomb/repair_RadA"/>
</dbReference>
<dbReference type="InterPro" id="IPR016467">
    <property type="entry name" value="DNA_recomb/repair_RecA-like"/>
</dbReference>
<dbReference type="InterPro" id="IPR010995">
    <property type="entry name" value="DNA_repair_Rad51/TF_NusA_a-hlx"/>
</dbReference>
<dbReference type="InterPro" id="IPR027417">
    <property type="entry name" value="P-loop_NTPase"/>
</dbReference>
<dbReference type="InterPro" id="IPR020588">
    <property type="entry name" value="RecA_ATP-bd"/>
</dbReference>
<dbReference type="InterPro" id="IPR020587">
    <property type="entry name" value="RecA_monomer-monomer_interface"/>
</dbReference>
<dbReference type="NCBIfam" id="NF003301">
    <property type="entry name" value="PRK04301.1"/>
    <property type="match status" value="1"/>
</dbReference>
<dbReference type="NCBIfam" id="TIGR02236">
    <property type="entry name" value="recomb_radA"/>
    <property type="match status" value="1"/>
</dbReference>
<dbReference type="PANTHER" id="PTHR22942:SF30">
    <property type="entry name" value="MEIOTIC RECOMBINATION PROTEIN DMC1_LIM15 HOMOLOG"/>
    <property type="match status" value="1"/>
</dbReference>
<dbReference type="PANTHER" id="PTHR22942">
    <property type="entry name" value="RECA/RAD51/RADA DNA STRAND-PAIRING FAMILY MEMBER"/>
    <property type="match status" value="1"/>
</dbReference>
<dbReference type="Pfam" id="PF14520">
    <property type="entry name" value="HHH_5"/>
    <property type="match status" value="1"/>
</dbReference>
<dbReference type="Pfam" id="PF08423">
    <property type="entry name" value="Rad51"/>
    <property type="match status" value="1"/>
</dbReference>
<dbReference type="PIRSF" id="PIRSF005856">
    <property type="entry name" value="Rad51"/>
    <property type="match status" value="1"/>
</dbReference>
<dbReference type="SMART" id="SM00382">
    <property type="entry name" value="AAA"/>
    <property type="match status" value="1"/>
</dbReference>
<dbReference type="SUPFAM" id="SSF52540">
    <property type="entry name" value="P-loop containing nucleoside triphosphate hydrolases"/>
    <property type="match status" value="1"/>
</dbReference>
<dbReference type="SUPFAM" id="SSF47794">
    <property type="entry name" value="Rad51 N-terminal domain-like"/>
    <property type="match status" value="1"/>
</dbReference>
<dbReference type="PROSITE" id="PS50162">
    <property type="entry name" value="RECA_2"/>
    <property type="match status" value="1"/>
</dbReference>
<dbReference type="PROSITE" id="PS50163">
    <property type="entry name" value="RECA_3"/>
    <property type="match status" value="1"/>
</dbReference>